<organism>
    <name type="scientific">Homo sapiens</name>
    <name type="common">Human</name>
    <dbReference type="NCBI Taxonomy" id="9606"/>
    <lineage>
        <taxon>Eukaryota</taxon>
        <taxon>Metazoa</taxon>
        <taxon>Chordata</taxon>
        <taxon>Craniata</taxon>
        <taxon>Vertebrata</taxon>
        <taxon>Euteleostomi</taxon>
        <taxon>Mammalia</taxon>
        <taxon>Eutheria</taxon>
        <taxon>Euarchontoglires</taxon>
        <taxon>Primates</taxon>
        <taxon>Haplorrhini</taxon>
        <taxon>Catarrhini</taxon>
        <taxon>Hominidae</taxon>
        <taxon>Homo</taxon>
    </lineage>
</organism>
<comment type="function">
    <text evidence="4 5 13">Accessory subunit of the mitochondrial membrane respiratory chain NADH dehydrogenase (Complex I), that is believed not to be involved in catalysis. Complex I functions in the transfer of electrons from NADH to the respiratory chain. The immediate electron acceptor for the enzyme is believed to be ubiquinone.</text>
</comment>
<comment type="subunit">
    <text evidence="5 11 12">Mammalian complex I is composed of 45 different subunits. This is a component of the iron-sulfur (IP) fragment of the enzyme. Interacts with BCAP31 and TOMM40; the interaction mediates its translocation to the mitochondria; the interaction with BCAP31 is direct (PubMed:31206022).</text>
</comment>
<comment type="subcellular location">
    <subcellularLocation>
        <location evidence="4 5 12">Mitochondrion inner membrane</location>
        <topology evidence="5">Peripheral membrane protein</topology>
        <orientation evidence="5">Matrix side</orientation>
    </subcellularLocation>
    <text evidence="12">The interaction with BCAP31 mediates mitochondria localization.</text>
</comment>
<comment type="disease" evidence="3 4 6 7 8 9 13">
    <disease id="DI-01981">
        <name>Mitochondrial complex I deficiency, nuclear type 1</name>
        <acronym>MC1DN1</acronym>
        <description>A form of mitochondrial complex I deficiency, the most common biochemical signature of mitochondrial disorders, a group of highly heterogeneous conditions characterized by defective oxidative phosphorylation, which collectively affects 1 in 5-10000 live births. Clinical disorders have variable severity, ranging from lethal neonatal disease to adult-onset neurodegenerative disorders. Phenotypes include macrocephaly with progressive leukodystrophy, non-specific encephalopathy, cardiomyopathy, myopathy, liver disease, Leigh syndrome, Leber hereditary optic neuropathy, and some forms of Parkinson disease.</description>
        <dbReference type="MIM" id="252010"/>
    </disease>
    <text>The disease is caused by variants affecting the gene represented in this entry.</text>
</comment>
<comment type="similarity">
    <text evidence="14">Belongs to the complex I NDUFS4 subunit family.</text>
</comment>
<protein>
    <recommendedName>
        <fullName>NADH dehydrogenase [ubiquinone] iron-sulfur protein 4, mitochondrial</fullName>
    </recommendedName>
    <alternativeName>
        <fullName>Complex I-18 kDa</fullName>
        <shortName>CI-18 kDa</shortName>
    </alternativeName>
    <alternativeName>
        <fullName>Complex I-AQDQ</fullName>
        <shortName>CI-AQDQ</shortName>
    </alternativeName>
    <alternativeName>
        <fullName>NADH-ubiquinone oxidoreductase 18 kDa subunit</fullName>
    </alternativeName>
</protein>
<proteinExistence type="evidence at protein level"/>
<dbReference type="EMBL" id="AF020351">
    <property type="protein sequence ID" value="AAB87865.1"/>
    <property type="molecule type" value="mRNA"/>
</dbReference>
<dbReference type="EMBL" id="BC005270">
    <property type="protein sequence ID" value="AAH05270.1"/>
    <property type="molecule type" value="mRNA"/>
</dbReference>
<dbReference type="CCDS" id="CCDS3960.1"/>
<dbReference type="RefSeq" id="NP_002486.1">
    <property type="nucleotide sequence ID" value="NM_002495.4"/>
</dbReference>
<dbReference type="PDB" id="5XTB">
    <property type="method" value="EM"/>
    <property type="resolution" value="3.40 A"/>
    <property type="chains" value="L=58-175"/>
</dbReference>
<dbReference type="PDB" id="5XTD">
    <property type="method" value="EM"/>
    <property type="resolution" value="3.70 A"/>
    <property type="chains" value="L=58-175"/>
</dbReference>
<dbReference type="PDB" id="5XTH">
    <property type="method" value="EM"/>
    <property type="resolution" value="3.90 A"/>
    <property type="chains" value="L=58-175"/>
</dbReference>
<dbReference type="PDB" id="5XTI">
    <property type="method" value="EM"/>
    <property type="resolution" value="17.40 A"/>
    <property type="chains" value="BL/L=58-175"/>
</dbReference>
<dbReference type="PDBsum" id="5XTB"/>
<dbReference type="PDBsum" id="5XTD"/>
<dbReference type="PDBsum" id="5XTH"/>
<dbReference type="PDBsum" id="5XTI"/>
<dbReference type="SMR" id="O43181"/>
<dbReference type="BioGRID" id="110803">
    <property type="interactions" value="191"/>
</dbReference>
<dbReference type="ComplexPortal" id="CPX-577">
    <property type="entry name" value="Mitochondrial respiratory chain complex I"/>
</dbReference>
<dbReference type="CORUM" id="O43181"/>
<dbReference type="FunCoup" id="O43181">
    <property type="interactions" value="1631"/>
</dbReference>
<dbReference type="IntAct" id="O43181">
    <property type="interactions" value="70"/>
</dbReference>
<dbReference type="MINT" id="O43181"/>
<dbReference type="STRING" id="9606.ENSP00000296684"/>
<dbReference type="BindingDB" id="O43181"/>
<dbReference type="ChEMBL" id="CHEMBL2363065"/>
<dbReference type="DrugBank" id="DB00157">
    <property type="generic name" value="NADH"/>
</dbReference>
<dbReference type="DrugCentral" id="O43181"/>
<dbReference type="CarbonylDB" id="O43181"/>
<dbReference type="GlyGen" id="O43181">
    <property type="glycosylation" value="1 site, 1 O-linked glycan (1 site)"/>
</dbReference>
<dbReference type="iPTMnet" id="O43181"/>
<dbReference type="PhosphoSitePlus" id="O43181"/>
<dbReference type="BioMuta" id="NDUFS4"/>
<dbReference type="jPOST" id="O43181"/>
<dbReference type="MassIVE" id="O43181"/>
<dbReference type="PaxDb" id="9606-ENSP00000296684"/>
<dbReference type="PeptideAtlas" id="O43181"/>
<dbReference type="ProteomicsDB" id="48793"/>
<dbReference type="Pumba" id="O43181"/>
<dbReference type="TopDownProteomics" id="O43181"/>
<dbReference type="Antibodypedia" id="1269">
    <property type="antibodies" value="305 antibodies from 34 providers"/>
</dbReference>
<dbReference type="DNASU" id="4724"/>
<dbReference type="Ensembl" id="ENST00000296684.10">
    <property type="protein sequence ID" value="ENSP00000296684.5"/>
    <property type="gene ID" value="ENSG00000164258.12"/>
</dbReference>
<dbReference type="GeneID" id="4724"/>
<dbReference type="KEGG" id="hsa:4724"/>
<dbReference type="MANE-Select" id="ENST00000296684.10">
    <property type="protein sequence ID" value="ENSP00000296684.5"/>
    <property type="RefSeq nucleotide sequence ID" value="NM_002495.4"/>
    <property type="RefSeq protein sequence ID" value="NP_002486.1"/>
</dbReference>
<dbReference type="UCSC" id="uc003jpe.3">
    <property type="organism name" value="human"/>
</dbReference>
<dbReference type="AGR" id="HGNC:7711"/>
<dbReference type="CTD" id="4724"/>
<dbReference type="DisGeNET" id="4724"/>
<dbReference type="GeneCards" id="NDUFS4"/>
<dbReference type="GeneReviews" id="NDUFS4"/>
<dbReference type="HGNC" id="HGNC:7711">
    <property type="gene designation" value="NDUFS4"/>
</dbReference>
<dbReference type="HPA" id="ENSG00000164258">
    <property type="expression patterns" value="Low tissue specificity"/>
</dbReference>
<dbReference type="MalaCards" id="NDUFS4"/>
<dbReference type="MIM" id="252010">
    <property type="type" value="phenotype"/>
</dbReference>
<dbReference type="MIM" id="602694">
    <property type="type" value="gene"/>
</dbReference>
<dbReference type="neXtProt" id="NX_O43181"/>
<dbReference type="OpenTargets" id="ENSG00000164258"/>
<dbReference type="Orphanet" id="2609">
    <property type="disease" value="Isolated complex I deficiency"/>
</dbReference>
<dbReference type="PharmGKB" id="PA31521"/>
<dbReference type="VEuPathDB" id="HostDB:ENSG00000164258"/>
<dbReference type="eggNOG" id="KOG3389">
    <property type="taxonomic scope" value="Eukaryota"/>
</dbReference>
<dbReference type="GeneTree" id="ENSGT00390000013835"/>
<dbReference type="HOGENOM" id="CLU_077196_3_0_1"/>
<dbReference type="InParanoid" id="O43181"/>
<dbReference type="OMA" id="GTIMKFD"/>
<dbReference type="OrthoDB" id="3089at2759"/>
<dbReference type="PAN-GO" id="O43181">
    <property type="GO annotations" value="1 GO annotation based on evolutionary models"/>
</dbReference>
<dbReference type="PhylomeDB" id="O43181"/>
<dbReference type="TreeFam" id="TF105619"/>
<dbReference type="BioCyc" id="MetaCyc:ENSG00000164258-MONOMER"/>
<dbReference type="PathwayCommons" id="O43181"/>
<dbReference type="Reactome" id="R-HSA-611105">
    <property type="pathway name" value="Respiratory electron transport"/>
</dbReference>
<dbReference type="Reactome" id="R-HSA-6799198">
    <property type="pathway name" value="Complex I biogenesis"/>
</dbReference>
<dbReference type="SignaLink" id="O43181"/>
<dbReference type="SIGNOR" id="O43181"/>
<dbReference type="BioGRID-ORCS" id="4724">
    <property type="hits" value="14 hits in 1158 CRISPR screens"/>
</dbReference>
<dbReference type="ChiTaRS" id="NDUFS4">
    <property type="organism name" value="human"/>
</dbReference>
<dbReference type="GeneWiki" id="NDUFS4"/>
<dbReference type="GenomeRNAi" id="4724"/>
<dbReference type="Pharos" id="O43181">
    <property type="development level" value="Tclin"/>
</dbReference>
<dbReference type="PRO" id="PR:O43181"/>
<dbReference type="Proteomes" id="UP000005640">
    <property type="component" value="Chromosome 5"/>
</dbReference>
<dbReference type="RNAct" id="O43181">
    <property type="molecule type" value="protein"/>
</dbReference>
<dbReference type="Bgee" id="ENSG00000164258">
    <property type="expression patterns" value="Expressed in calcaneal tendon and 215 other cell types or tissues"/>
</dbReference>
<dbReference type="ExpressionAtlas" id="O43181">
    <property type="expression patterns" value="baseline and differential"/>
</dbReference>
<dbReference type="GO" id="GO:0005743">
    <property type="term" value="C:mitochondrial inner membrane"/>
    <property type="evidence" value="ECO:0000314"/>
    <property type="project" value="ComplexPortal"/>
</dbReference>
<dbReference type="GO" id="GO:0005739">
    <property type="term" value="C:mitochondrion"/>
    <property type="evidence" value="ECO:0000314"/>
    <property type="project" value="UniProtKB"/>
</dbReference>
<dbReference type="GO" id="GO:0045271">
    <property type="term" value="C:respiratory chain complex I"/>
    <property type="evidence" value="ECO:0000314"/>
    <property type="project" value="UniProtKB"/>
</dbReference>
<dbReference type="GO" id="GO:0008137">
    <property type="term" value="F:NADH dehydrogenase (ubiquinone) activity"/>
    <property type="evidence" value="ECO:0000315"/>
    <property type="project" value="UniProtKB"/>
</dbReference>
<dbReference type="GO" id="GO:0009060">
    <property type="term" value="P:aerobic respiration"/>
    <property type="evidence" value="ECO:0000303"/>
    <property type="project" value="ComplexPortal"/>
</dbReference>
<dbReference type="GO" id="GO:0007420">
    <property type="term" value="P:brain development"/>
    <property type="evidence" value="ECO:0000315"/>
    <property type="project" value="UniProtKB"/>
</dbReference>
<dbReference type="GO" id="GO:0006120">
    <property type="term" value="P:mitochondrial electron transport, NADH to ubiquinone"/>
    <property type="evidence" value="ECO:0000303"/>
    <property type="project" value="UniProtKB"/>
</dbReference>
<dbReference type="GO" id="GO:0032981">
    <property type="term" value="P:mitochondrial respiratory chain complex I assembly"/>
    <property type="evidence" value="ECO:0000315"/>
    <property type="project" value="UniProtKB"/>
</dbReference>
<dbReference type="GO" id="GO:0042776">
    <property type="term" value="P:proton motive force-driven mitochondrial ATP synthesis"/>
    <property type="evidence" value="ECO:0000303"/>
    <property type="project" value="ComplexPortal"/>
</dbReference>
<dbReference type="GO" id="GO:0072593">
    <property type="term" value="P:reactive oxygen species metabolic process"/>
    <property type="evidence" value="ECO:0000315"/>
    <property type="project" value="UniProtKB"/>
</dbReference>
<dbReference type="GO" id="GO:0001932">
    <property type="term" value="P:regulation of protein phosphorylation"/>
    <property type="evidence" value="ECO:0000315"/>
    <property type="project" value="MGI"/>
</dbReference>
<dbReference type="GO" id="GO:0051591">
    <property type="term" value="P:response to cAMP"/>
    <property type="evidence" value="ECO:0000315"/>
    <property type="project" value="UniProtKB"/>
</dbReference>
<dbReference type="FunFam" id="3.30.160.190:FF:000001">
    <property type="entry name" value="NADH-ubiquinone oxidoreductase 21 kDa subunit mitochondrial"/>
    <property type="match status" value="1"/>
</dbReference>
<dbReference type="Gene3D" id="3.30.160.190">
    <property type="entry name" value="atu1810 like domain"/>
    <property type="match status" value="1"/>
</dbReference>
<dbReference type="InterPro" id="IPR006885">
    <property type="entry name" value="NADH_UbQ_FeS_4_mit-like"/>
</dbReference>
<dbReference type="InterPro" id="IPR038532">
    <property type="entry name" value="NDUFS4-like_sf"/>
</dbReference>
<dbReference type="PANTHER" id="PTHR12219:SF28">
    <property type="entry name" value="NADH DEHYDROGENASE [UBIQUINONE] IRON-SULFUR PROTEIN 4, MITOCHONDRIAL"/>
    <property type="match status" value="1"/>
</dbReference>
<dbReference type="PANTHER" id="PTHR12219">
    <property type="entry name" value="NADH-UBIQUINONE OXIDOREDUCTASE"/>
    <property type="match status" value="1"/>
</dbReference>
<dbReference type="Pfam" id="PF04800">
    <property type="entry name" value="NDUS4"/>
    <property type="match status" value="1"/>
</dbReference>
<feature type="transit peptide" description="Mitochondrion" evidence="1">
    <location>
        <begin position="1"/>
        <end position="42"/>
    </location>
</feature>
<feature type="chain" id="PRO_0000020038" description="NADH dehydrogenase [ubiquinone] iron-sulfur protein 4, mitochondrial">
    <location>
        <begin position="43"/>
        <end position="175"/>
    </location>
</feature>
<feature type="region of interest" description="Disordered" evidence="2">
    <location>
        <begin position="151"/>
        <end position="175"/>
    </location>
</feature>
<feature type="modified residue" description="Phosphoserine; by PKA" evidence="10">
    <location>
        <position position="173"/>
    </location>
</feature>
<feature type="sequence variant" id="VAR_078943" description="In MC1DN1; loss of mitochondrial respiratory complex I; altered nonsense mediated mRNA decay." evidence="4 7">
    <location>
        <begin position="15"/>
        <end position="175"/>
    </location>
</feature>
<feature type="sequence variant" id="VAR_078944" description="In MC1DN1." evidence="3">
    <location>
        <begin position="97"/>
        <end position="175"/>
    </location>
</feature>
<feature type="sequence variant" id="VAR_078945" description="In MC1DN1." evidence="3">
    <location>
        <begin position="106"/>
        <end position="175"/>
    </location>
</feature>
<feature type="sequence variant" id="VAR_078946" description="In MC1DN1; dbSNP:rs747359752." evidence="9">
    <original>D</original>
    <variation>H</variation>
    <location>
        <position position="119"/>
    </location>
</feature>
<feature type="sequence variant" id="VAR_012037" description="In dbSNP:rs1044692.">
    <original>T</original>
    <variation>P</variation>
    <location>
        <position position="174"/>
    </location>
</feature>
<feature type="mutagenesis site" description="Loss of phosphorylation." evidence="10">
    <original>S</original>
    <variation>A</variation>
    <location>
        <position position="173"/>
    </location>
</feature>
<feature type="sequence conflict" description="In Ref. 2; AAH05270." evidence="14" ref="2">
    <original>T</original>
    <variation>S</variation>
    <location>
        <position position="39"/>
    </location>
</feature>
<feature type="turn" evidence="15">
    <location>
        <begin position="62"/>
        <end position="64"/>
    </location>
</feature>
<feature type="helix" evidence="15">
    <location>
        <begin position="69"/>
        <end position="74"/>
    </location>
</feature>
<feature type="strand" evidence="15">
    <location>
        <begin position="76"/>
        <end position="80"/>
    </location>
</feature>
<feature type="strand" evidence="15">
    <location>
        <begin position="86"/>
        <end position="88"/>
    </location>
</feature>
<feature type="turn" evidence="15">
    <location>
        <begin position="92"/>
        <end position="94"/>
    </location>
</feature>
<feature type="strand" evidence="15">
    <location>
        <begin position="95"/>
        <end position="101"/>
    </location>
</feature>
<feature type="strand" evidence="15">
    <location>
        <begin position="106"/>
        <end position="108"/>
    </location>
</feature>
<feature type="turn" evidence="15">
    <location>
        <begin position="110"/>
        <end position="113"/>
    </location>
</feature>
<feature type="strand" evidence="15">
    <location>
        <begin position="115"/>
        <end position="118"/>
    </location>
</feature>
<feature type="helix" evidence="15">
    <location>
        <begin position="120"/>
        <end position="123"/>
    </location>
</feature>
<feature type="strand" evidence="15">
    <location>
        <begin position="125"/>
        <end position="130"/>
    </location>
</feature>
<feature type="helix" evidence="15">
    <location>
        <begin position="131"/>
        <end position="141"/>
    </location>
</feature>
<feature type="helix" evidence="15">
    <location>
        <begin position="161"/>
        <end position="163"/>
    </location>
</feature>
<feature type="turn" evidence="15">
    <location>
        <begin position="166"/>
        <end position="169"/>
    </location>
</feature>
<reference key="1">
    <citation type="journal article" date="1998" name="Am. J. Hum. Genet.">
        <title>Demonstration of a new pathogenic mutation in human complex I deficiency: a 5-bp duplication in the nuclear gene encoding the 18-kD (AQDQ) subunit.</title>
        <authorList>
            <person name="van den Heuvel L."/>
            <person name="Ruitenbeek W."/>
            <person name="Smeets R."/>
            <person name="Gelman-Kohan Z."/>
            <person name="Elpeleg O."/>
            <person name="Loeffen J."/>
            <person name="Trijbels F."/>
            <person name="Mariman E."/>
            <person name="de Bruijn D."/>
            <person name="Smeitink J."/>
        </authorList>
    </citation>
    <scope>NUCLEOTIDE SEQUENCE [MRNA]</scope>
    <scope>FUNCTION</scope>
    <scope>INVOLVEMENT IN MC1DN1</scope>
</reference>
<reference key="2">
    <citation type="journal article" date="2004" name="Genome Res.">
        <title>The status, quality, and expansion of the NIH full-length cDNA project: the Mammalian Gene Collection (MGC).</title>
        <authorList>
            <consortium name="The MGC Project Team"/>
        </authorList>
    </citation>
    <scope>NUCLEOTIDE SEQUENCE [LARGE SCALE MRNA]</scope>
    <source>
        <tissue>Urinary bladder</tissue>
    </source>
</reference>
<reference key="3">
    <citation type="journal article" date="2001" name="Hum. Mol. Genet.">
        <title>A nonsense mutation in the NDUFS4 gene encoding the 18 kDa (AQDQ) subunit of complex I abolishes assembly and activity of the complex in a patient with Leigh-like syndrome.</title>
        <authorList>
            <person name="Petruzzella V."/>
            <person name="Vergari R."/>
            <person name="Puzziferri I."/>
            <person name="Boffoli D."/>
            <person name="Lamantea E."/>
            <person name="Zeviani M."/>
            <person name="Papa S."/>
        </authorList>
    </citation>
    <scope>FUNCTION</scope>
    <scope>SUBCELLULAR LOCATION</scope>
    <scope>VARIANT MC1DN1 15-TRP--LYS-175 DEL</scope>
</reference>
<reference key="4">
    <citation type="journal article" date="2003" name="Hum. Genet.">
        <title>Genotyping microsatellite DNA markers at putative disease loci in inbred/multiplex families with respiratory chain complex I deficiency allows rapid identification of a novel nonsense mutation (IVS1nt -1) in the NDUFS4 gene in Leigh syndrome.</title>
        <authorList>
            <person name="Benit P."/>
            <person name="Steffann J."/>
            <person name="Lebon S."/>
            <person name="Chretien D."/>
            <person name="Kadhom N."/>
            <person name="de Lonlay P."/>
            <person name="Goldenberg A."/>
            <person name="Dumez Y."/>
            <person name="Dommergues M."/>
            <person name="Rustin P."/>
            <person name="Munnich A."/>
            <person name="Roetig A."/>
        </authorList>
    </citation>
    <scope>INVOLVEMENT IN MC1DN1</scope>
</reference>
<reference key="5">
    <citation type="journal article" date="2003" name="J. Biol. Chem.">
        <title>The subunit composition of the human NADH dehydrogenase obtained by rapid one-step immunopurification.</title>
        <authorList>
            <person name="Murray J."/>
            <person name="Zhang B."/>
            <person name="Taylor S.W."/>
            <person name="Oglesbee D."/>
            <person name="Fahy E."/>
            <person name="Marusich M.F."/>
            <person name="Ghosh S.S."/>
            <person name="Capaldi R.A."/>
        </authorList>
    </citation>
    <scope>IDENTIFICATION IN THE NADH-UBIQUINONE OXIDOREDUCTASE COMPLEX</scope>
    <scope>FUNCTION</scope>
    <scope>IDENTIFICATION BY MASS SPECTROMETRY</scope>
    <scope>SUBCELLULAR LOCATION</scope>
</reference>
<reference key="6">
    <citation type="journal article" date="2008" name="J. Inherit. Metab. Dis.">
        <title>A novel mutation in NDUFS4 causes Leigh syndrome in an Ashkenazi Jewish family.</title>
        <authorList>
            <person name="Anderson S.L."/>
            <person name="Chung W.K."/>
            <person name="Frezzo J."/>
            <person name="Papp J.C."/>
            <person name="Ekstein J."/>
            <person name="DiMauro S."/>
            <person name="Rubin B.Y."/>
        </authorList>
    </citation>
    <scope>INVOLVEMENT IN MC1DN1</scope>
</reference>
<reference key="7">
    <citation type="journal article" date="2010" name="Mitochondrion">
        <title>Phosphorylation pattern of the NDUFS4 subunit of complex I of the mammalian respiratory chain.</title>
        <authorList>
            <person name="De Rasmo D."/>
            <person name="Palmisano G."/>
            <person name="Scacco S."/>
            <person name="Technikova-Dobrova Z."/>
            <person name="Panelli D."/>
            <person name="Cocco T."/>
            <person name="Sardanelli A.M."/>
            <person name="Gnoni A."/>
            <person name="Micelli L."/>
            <person name="Trani A."/>
            <person name="Di Luccia A."/>
            <person name="Papa S."/>
        </authorList>
    </citation>
    <scope>PHOSPHORYLATION AT SER-173</scope>
    <scope>MUTAGENESIS OF SER-173</scope>
</reference>
<reference key="8">
    <citation type="journal article" date="2011" name="BMC Syst. Biol.">
        <title>Initial characterization of the human central proteome.</title>
        <authorList>
            <person name="Burkard T.R."/>
            <person name="Planyavsky M."/>
            <person name="Kaupe I."/>
            <person name="Breitwieser F.P."/>
            <person name="Buerckstuemmer T."/>
            <person name="Bennett K.L."/>
            <person name="Superti-Furga G."/>
            <person name="Colinge J."/>
        </authorList>
    </citation>
    <scope>IDENTIFICATION BY MASS SPECTROMETRY [LARGE SCALE ANALYSIS]</scope>
</reference>
<reference key="9">
    <citation type="journal article" date="2015" name="Proteomics">
        <title>N-terminome analysis of the human mitochondrial proteome.</title>
        <authorList>
            <person name="Vaca Jacome A.S."/>
            <person name="Rabilloud T."/>
            <person name="Schaeffer-Reiss C."/>
            <person name="Rompais M."/>
            <person name="Ayoub D."/>
            <person name="Lane L."/>
            <person name="Bairoch A."/>
            <person name="Van Dorsselaer A."/>
            <person name="Carapito C."/>
        </authorList>
    </citation>
    <scope>IDENTIFICATION BY MASS SPECTROMETRY [LARGE SCALE ANALYSIS]</scope>
</reference>
<reference key="10">
    <citation type="journal article" date="2016" name="Nature">
        <title>Accessory subunits are integral for assembly and function of human mitochondrial complex I.</title>
        <authorList>
            <person name="Stroud D.A."/>
            <person name="Surgenor E.E."/>
            <person name="Formosa L.E."/>
            <person name="Reljic B."/>
            <person name="Frazier A.E."/>
            <person name="Dibley M.G."/>
            <person name="Osellame L.D."/>
            <person name="Stait T."/>
            <person name="Beilharz T.H."/>
            <person name="Thorburn D.R."/>
            <person name="Salim A."/>
            <person name="Ryan M.T."/>
        </authorList>
    </citation>
    <scope>IDENTIFICATION IN THE NADH-UBIQUINONE OXIDOREDUCTASE COMPLEX</scope>
</reference>
<reference key="11">
    <citation type="journal article" date="2019" name="Sci. Adv.">
        <title>BAP31 regulates mitochondrial function via interaction with Tom40 within ER-mitochondria contact sites.</title>
        <authorList>
            <person name="Namba T."/>
        </authorList>
    </citation>
    <scope>INTERACTION WITH TOMM40 AND BCAP31</scope>
    <scope>SUBCELLULAR LOCATION</scope>
</reference>
<reference key="12">
    <citation type="journal article" date="2000" name="Biochem. Biophys. Res. Commun.">
        <title>Combined enzymatic complex I and III deficiency associated with mutations in the nuclear encoded NDUFS4 gene.</title>
        <authorList>
            <person name="Budde S.M."/>
            <person name="van den Heuvel L.P."/>
            <person name="Janssen A.J."/>
            <person name="Smeets R.J."/>
            <person name="Buskens C.A."/>
            <person name="DeMeirleir L."/>
            <person name="Van Coster R."/>
            <person name="Baethmann M."/>
            <person name="Voit T."/>
            <person name="Trijbels J.M."/>
            <person name="Smeitink J.A."/>
        </authorList>
    </citation>
    <scope>VARIANTS MC1DN1 97-TRP--LYS-175 DEL AND 106-ARG--LYS-175 DEL</scope>
</reference>
<reference key="13">
    <citation type="journal article" date="2005" name="FEBS Lett.">
        <title>Mutations in the NDUFS4 gene of mitochondrial complex I alter stability of the splice variants.</title>
        <authorList>
            <person name="Petruzzella V."/>
            <person name="Panelli D."/>
            <person name="Torraco A."/>
            <person name="Stella A."/>
            <person name="Papa S."/>
        </authorList>
    </citation>
    <scope>VARIANT MC1DN1 15-TRP--LYS-175 DEL</scope>
</reference>
<reference key="14">
    <citation type="journal article" date="2009" name="Mol. Genet. Metab.">
        <title>NDUFS4 mutations cause Leigh syndrome with predominant brainstem involvement.</title>
        <authorList>
            <person name="Leshinsky-Silver E."/>
            <person name="Lebre A.S."/>
            <person name="Minai L."/>
            <person name="Saada A."/>
            <person name="Steffann J."/>
            <person name="Cohen S."/>
            <person name="Roetig A."/>
            <person name="Munnich A."/>
            <person name="Lev D."/>
            <person name="Lerman-Sagie T."/>
        </authorList>
    </citation>
    <scope>VARIANT MC1DN1 HIS-119</scope>
</reference>
<keyword id="KW-0002">3D-structure</keyword>
<keyword id="KW-0225">Disease variant</keyword>
<keyword id="KW-0249">Electron transport</keyword>
<keyword id="KW-0472">Membrane</keyword>
<keyword id="KW-0496">Mitochondrion</keyword>
<keyword id="KW-0999">Mitochondrion inner membrane</keyword>
<keyword id="KW-0597">Phosphoprotein</keyword>
<keyword id="KW-1274">Primary mitochondrial disease</keyword>
<keyword id="KW-1267">Proteomics identification</keyword>
<keyword id="KW-1185">Reference proteome</keyword>
<keyword id="KW-0679">Respiratory chain</keyword>
<keyword id="KW-0809">Transit peptide</keyword>
<keyword id="KW-0813">Transport</keyword>
<sequence length="175" mass="20108">MAAVSMSVVLRQTLWRRRAVAVAALSVSRVPTRSLRTSTWRLAQDQTQDTQLITVDEKLDITTLTGVPEEHIKTRKVRIFVPARNNMQSGVNNTKKWKMEFDTRERWENPLMGWASTADPLSNMVLTFSTKEDAVSFAEKNGWSYDIEERKVPKPKSKSYGANFSWNKRTRVSTK</sequence>
<accession>O43181</accession>
<accession>Q9BS69</accession>
<gene>
    <name type="primary">NDUFS4</name>
</gene>
<evidence type="ECO:0000250" key="1"/>
<evidence type="ECO:0000256" key="2">
    <source>
        <dbReference type="SAM" id="MobiDB-lite"/>
    </source>
</evidence>
<evidence type="ECO:0000269" key="3">
    <source>
    </source>
</evidence>
<evidence type="ECO:0000269" key="4">
    <source>
    </source>
</evidence>
<evidence type="ECO:0000269" key="5">
    <source>
    </source>
</evidence>
<evidence type="ECO:0000269" key="6">
    <source>
    </source>
</evidence>
<evidence type="ECO:0000269" key="7">
    <source>
    </source>
</evidence>
<evidence type="ECO:0000269" key="8">
    <source>
    </source>
</evidence>
<evidence type="ECO:0000269" key="9">
    <source>
    </source>
</evidence>
<evidence type="ECO:0000269" key="10">
    <source>
    </source>
</evidence>
<evidence type="ECO:0000269" key="11">
    <source>
    </source>
</evidence>
<evidence type="ECO:0000269" key="12">
    <source>
    </source>
</evidence>
<evidence type="ECO:0000269" key="13">
    <source>
    </source>
</evidence>
<evidence type="ECO:0000305" key="14"/>
<evidence type="ECO:0007829" key="15">
    <source>
        <dbReference type="PDB" id="5XTB"/>
    </source>
</evidence>
<name>NDUS4_HUMAN</name>